<gene>
    <name evidence="1" type="primary">rlmN</name>
    <name type="ordered locus">PSPTO_1431</name>
</gene>
<name>RLMN_PSESM</name>
<proteinExistence type="inferred from homology"/>
<organism>
    <name type="scientific">Pseudomonas syringae pv. tomato (strain ATCC BAA-871 / DC3000)</name>
    <dbReference type="NCBI Taxonomy" id="223283"/>
    <lineage>
        <taxon>Bacteria</taxon>
        <taxon>Pseudomonadati</taxon>
        <taxon>Pseudomonadota</taxon>
        <taxon>Gammaproteobacteria</taxon>
        <taxon>Pseudomonadales</taxon>
        <taxon>Pseudomonadaceae</taxon>
        <taxon>Pseudomonas</taxon>
    </lineage>
</organism>
<dbReference type="EC" id="2.1.1.192" evidence="1"/>
<dbReference type="EMBL" id="AE016853">
    <property type="protein sequence ID" value="AAO54952.1"/>
    <property type="molecule type" value="Genomic_DNA"/>
</dbReference>
<dbReference type="RefSeq" id="NP_791257.1">
    <property type="nucleotide sequence ID" value="NC_004578.1"/>
</dbReference>
<dbReference type="RefSeq" id="WP_005771021.1">
    <property type="nucleotide sequence ID" value="NC_004578.1"/>
</dbReference>
<dbReference type="SMR" id="Q886Z3"/>
<dbReference type="STRING" id="223283.PSPTO_1431"/>
<dbReference type="GeneID" id="1183068"/>
<dbReference type="KEGG" id="pst:PSPTO_1431"/>
<dbReference type="PATRIC" id="fig|223283.9.peg.1451"/>
<dbReference type="eggNOG" id="COG0820">
    <property type="taxonomic scope" value="Bacteria"/>
</dbReference>
<dbReference type="HOGENOM" id="CLU_029101_0_0_6"/>
<dbReference type="OrthoDB" id="9793973at2"/>
<dbReference type="PhylomeDB" id="Q886Z3"/>
<dbReference type="Proteomes" id="UP000002515">
    <property type="component" value="Chromosome"/>
</dbReference>
<dbReference type="GO" id="GO:0005737">
    <property type="term" value="C:cytoplasm"/>
    <property type="evidence" value="ECO:0007669"/>
    <property type="project" value="UniProtKB-SubCell"/>
</dbReference>
<dbReference type="GO" id="GO:0051539">
    <property type="term" value="F:4 iron, 4 sulfur cluster binding"/>
    <property type="evidence" value="ECO:0007669"/>
    <property type="project" value="UniProtKB-UniRule"/>
</dbReference>
<dbReference type="GO" id="GO:0046872">
    <property type="term" value="F:metal ion binding"/>
    <property type="evidence" value="ECO:0007669"/>
    <property type="project" value="UniProtKB-KW"/>
</dbReference>
<dbReference type="GO" id="GO:0070040">
    <property type="term" value="F:rRNA (adenine(2503)-C2-)-methyltransferase activity"/>
    <property type="evidence" value="ECO:0007669"/>
    <property type="project" value="UniProtKB-UniRule"/>
</dbReference>
<dbReference type="GO" id="GO:0019843">
    <property type="term" value="F:rRNA binding"/>
    <property type="evidence" value="ECO:0007669"/>
    <property type="project" value="UniProtKB-UniRule"/>
</dbReference>
<dbReference type="GO" id="GO:0002935">
    <property type="term" value="F:tRNA (adenine(37)-C2)-methyltransferase activity"/>
    <property type="evidence" value="ECO:0007669"/>
    <property type="project" value="UniProtKB-UniRule"/>
</dbReference>
<dbReference type="GO" id="GO:0000049">
    <property type="term" value="F:tRNA binding"/>
    <property type="evidence" value="ECO:0007669"/>
    <property type="project" value="UniProtKB-UniRule"/>
</dbReference>
<dbReference type="GO" id="GO:0070475">
    <property type="term" value="P:rRNA base methylation"/>
    <property type="evidence" value="ECO:0007669"/>
    <property type="project" value="UniProtKB-UniRule"/>
</dbReference>
<dbReference type="GO" id="GO:0030488">
    <property type="term" value="P:tRNA methylation"/>
    <property type="evidence" value="ECO:0007669"/>
    <property type="project" value="UniProtKB-UniRule"/>
</dbReference>
<dbReference type="CDD" id="cd01335">
    <property type="entry name" value="Radical_SAM"/>
    <property type="match status" value="1"/>
</dbReference>
<dbReference type="FunFam" id="1.10.150.530:FF:000003">
    <property type="entry name" value="Dual-specificity RNA methyltransferase RlmN"/>
    <property type="match status" value="1"/>
</dbReference>
<dbReference type="FunFam" id="3.20.20.70:FF:000008">
    <property type="entry name" value="Dual-specificity RNA methyltransferase RlmN"/>
    <property type="match status" value="1"/>
</dbReference>
<dbReference type="Gene3D" id="1.10.150.530">
    <property type="match status" value="1"/>
</dbReference>
<dbReference type="Gene3D" id="3.20.20.70">
    <property type="entry name" value="Aldolase class I"/>
    <property type="match status" value="1"/>
</dbReference>
<dbReference type="HAMAP" id="MF_01849">
    <property type="entry name" value="RNA_methyltr_RlmN"/>
    <property type="match status" value="1"/>
</dbReference>
<dbReference type="InterPro" id="IPR013785">
    <property type="entry name" value="Aldolase_TIM"/>
</dbReference>
<dbReference type="InterPro" id="IPR040072">
    <property type="entry name" value="Methyltransferase_A"/>
</dbReference>
<dbReference type="InterPro" id="IPR048641">
    <property type="entry name" value="RlmN_N"/>
</dbReference>
<dbReference type="InterPro" id="IPR027492">
    <property type="entry name" value="RNA_MTrfase_RlmN"/>
</dbReference>
<dbReference type="InterPro" id="IPR004383">
    <property type="entry name" value="rRNA_lsu_MTrfase_RlmN/Cfr"/>
</dbReference>
<dbReference type="InterPro" id="IPR007197">
    <property type="entry name" value="rSAM"/>
</dbReference>
<dbReference type="NCBIfam" id="TIGR00048">
    <property type="entry name" value="rRNA_mod_RlmN"/>
    <property type="match status" value="1"/>
</dbReference>
<dbReference type="PANTHER" id="PTHR30544">
    <property type="entry name" value="23S RRNA METHYLTRANSFERASE"/>
    <property type="match status" value="1"/>
</dbReference>
<dbReference type="PANTHER" id="PTHR30544:SF5">
    <property type="entry name" value="RADICAL SAM CORE DOMAIN-CONTAINING PROTEIN"/>
    <property type="match status" value="1"/>
</dbReference>
<dbReference type="Pfam" id="PF04055">
    <property type="entry name" value="Radical_SAM"/>
    <property type="match status" value="1"/>
</dbReference>
<dbReference type="Pfam" id="PF21016">
    <property type="entry name" value="RlmN_N"/>
    <property type="match status" value="1"/>
</dbReference>
<dbReference type="PIRSF" id="PIRSF006004">
    <property type="entry name" value="CHP00048"/>
    <property type="match status" value="1"/>
</dbReference>
<dbReference type="SFLD" id="SFLDF00275">
    <property type="entry name" value="adenosine_C2_methyltransferase"/>
    <property type="match status" value="1"/>
</dbReference>
<dbReference type="SFLD" id="SFLDS00029">
    <property type="entry name" value="Radical_SAM"/>
    <property type="match status" value="1"/>
</dbReference>
<dbReference type="SUPFAM" id="SSF102114">
    <property type="entry name" value="Radical SAM enzymes"/>
    <property type="match status" value="1"/>
</dbReference>
<dbReference type="PROSITE" id="PS51918">
    <property type="entry name" value="RADICAL_SAM"/>
    <property type="match status" value="1"/>
</dbReference>
<reference key="1">
    <citation type="journal article" date="2003" name="Proc. Natl. Acad. Sci. U.S.A.">
        <title>The complete genome sequence of the Arabidopsis and tomato pathogen Pseudomonas syringae pv. tomato DC3000.</title>
        <authorList>
            <person name="Buell C.R."/>
            <person name="Joardar V."/>
            <person name="Lindeberg M."/>
            <person name="Selengut J."/>
            <person name="Paulsen I.T."/>
            <person name="Gwinn M.L."/>
            <person name="Dodson R.J."/>
            <person name="DeBoy R.T."/>
            <person name="Durkin A.S."/>
            <person name="Kolonay J.F."/>
            <person name="Madupu R."/>
            <person name="Daugherty S.C."/>
            <person name="Brinkac L.M."/>
            <person name="Beanan M.J."/>
            <person name="Haft D.H."/>
            <person name="Nelson W.C."/>
            <person name="Davidsen T.M."/>
            <person name="Zafar N."/>
            <person name="Zhou L."/>
            <person name="Liu J."/>
            <person name="Yuan Q."/>
            <person name="Khouri H.M."/>
            <person name="Fedorova N.B."/>
            <person name="Tran B."/>
            <person name="Russell D."/>
            <person name="Berry K.J."/>
            <person name="Utterback T.R."/>
            <person name="Van Aken S.E."/>
            <person name="Feldblyum T.V."/>
            <person name="D'Ascenzo M."/>
            <person name="Deng W.-L."/>
            <person name="Ramos A.R."/>
            <person name="Alfano J.R."/>
            <person name="Cartinhour S."/>
            <person name="Chatterjee A.K."/>
            <person name="Delaney T.P."/>
            <person name="Lazarowitz S.G."/>
            <person name="Martin G.B."/>
            <person name="Schneider D.J."/>
            <person name="Tang X."/>
            <person name="Bender C.L."/>
            <person name="White O."/>
            <person name="Fraser C.M."/>
            <person name="Collmer A."/>
        </authorList>
    </citation>
    <scope>NUCLEOTIDE SEQUENCE [LARGE SCALE GENOMIC DNA]</scope>
    <source>
        <strain>ATCC BAA-871 / DC3000</strain>
    </source>
</reference>
<keyword id="KW-0004">4Fe-4S</keyword>
<keyword id="KW-0963">Cytoplasm</keyword>
<keyword id="KW-1015">Disulfide bond</keyword>
<keyword id="KW-0408">Iron</keyword>
<keyword id="KW-0411">Iron-sulfur</keyword>
<keyword id="KW-0479">Metal-binding</keyword>
<keyword id="KW-0489">Methyltransferase</keyword>
<keyword id="KW-1185">Reference proteome</keyword>
<keyword id="KW-0698">rRNA processing</keyword>
<keyword id="KW-0949">S-adenosyl-L-methionine</keyword>
<keyword id="KW-0808">Transferase</keyword>
<keyword id="KW-0819">tRNA processing</keyword>
<evidence type="ECO:0000255" key="1">
    <source>
        <dbReference type="HAMAP-Rule" id="MF_01849"/>
    </source>
</evidence>
<evidence type="ECO:0000255" key="2">
    <source>
        <dbReference type="PROSITE-ProRule" id="PRU01266"/>
    </source>
</evidence>
<protein>
    <recommendedName>
        <fullName evidence="1">Dual-specificity RNA methyltransferase RlmN</fullName>
        <ecNumber evidence="1">2.1.1.192</ecNumber>
    </recommendedName>
    <alternativeName>
        <fullName evidence="1">23S rRNA (adenine(2503)-C(2))-methyltransferase</fullName>
    </alternativeName>
    <alternativeName>
        <fullName evidence="1">23S rRNA m2A2503 methyltransferase</fullName>
    </alternativeName>
    <alternativeName>
        <fullName evidence="1">Ribosomal RNA large subunit methyltransferase N</fullName>
    </alternativeName>
    <alternativeName>
        <fullName evidence="1">tRNA (adenine(37)-C(2))-methyltransferase</fullName>
    </alternativeName>
    <alternativeName>
        <fullName evidence="1">tRNA m2A37 methyltransferase</fullName>
    </alternativeName>
</protein>
<accession>Q886Z3</accession>
<sequence>MIASTGKTNLLGLTQQEMEKFFDSIGEKRFRAGQVMKWIHHFGVDDFDAMTNVSKALREKLKACAEVRGPEVVSEDISSDGTRKWVVRVESGSCVETVYIPQGKRGTLCVSSQAGCALDCSFCSTGKQGFNSNLTAAEVIGQVWIANKSFGSVPATVDRAITNVVMMGMGEPLLNFDNVIAAMHLMMDDLGYGISKRRVTLSTSGVVPMIDELSKHIDVSLALSLHAPNDALRNQLVPLNKKYPLKVLLESCRRYMSSLGEKRVLTIEYTMLKDINDKVEHAVEMIELLKDTPCKINLIPFNPFPHSGYERPSNNAIRRFQDLLHQAGYNVTVRTTRGEDIDAACGQLVGQVMDRTRRSERYIAVRELSADVDTAPAAATRT</sequence>
<comment type="function">
    <text evidence="1">Specifically methylates position 2 of adenine 2503 in 23S rRNA and position 2 of adenine 37 in tRNAs. m2A2503 modification seems to play a crucial role in the proofreading step occurring at the peptidyl transferase center and thus would serve to optimize ribosomal fidelity.</text>
</comment>
<comment type="catalytic activity">
    <reaction evidence="1">
        <text>adenosine(2503) in 23S rRNA + 2 reduced [2Fe-2S]-[ferredoxin] + 2 S-adenosyl-L-methionine = 2-methyladenosine(2503) in 23S rRNA + 5'-deoxyadenosine + L-methionine + 2 oxidized [2Fe-2S]-[ferredoxin] + S-adenosyl-L-homocysteine</text>
        <dbReference type="Rhea" id="RHEA:42916"/>
        <dbReference type="Rhea" id="RHEA-COMP:10000"/>
        <dbReference type="Rhea" id="RHEA-COMP:10001"/>
        <dbReference type="Rhea" id="RHEA-COMP:10152"/>
        <dbReference type="Rhea" id="RHEA-COMP:10282"/>
        <dbReference type="ChEBI" id="CHEBI:17319"/>
        <dbReference type="ChEBI" id="CHEBI:33737"/>
        <dbReference type="ChEBI" id="CHEBI:33738"/>
        <dbReference type="ChEBI" id="CHEBI:57844"/>
        <dbReference type="ChEBI" id="CHEBI:57856"/>
        <dbReference type="ChEBI" id="CHEBI:59789"/>
        <dbReference type="ChEBI" id="CHEBI:74411"/>
        <dbReference type="ChEBI" id="CHEBI:74497"/>
        <dbReference type="EC" id="2.1.1.192"/>
    </reaction>
</comment>
<comment type="catalytic activity">
    <reaction evidence="1">
        <text>adenosine(37) in tRNA + 2 reduced [2Fe-2S]-[ferredoxin] + 2 S-adenosyl-L-methionine = 2-methyladenosine(37) in tRNA + 5'-deoxyadenosine + L-methionine + 2 oxidized [2Fe-2S]-[ferredoxin] + S-adenosyl-L-homocysteine</text>
        <dbReference type="Rhea" id="RHEA:43332"/>
        <dbReference type="Rhea" id="RHEA-COMP:10000"/>
        <dbReference type="Rhea" id="RHEA-COMP:10001"/>
        <dbReference type="Rhea" id="RHEA-COMP:10162"/>
        <dbReference type="Rhea" id="RHEA-COMP:10485"/>
        <dbReference type="ChEBI" id="CHEBI:17319"/>
        <dbReference type="ChEBI" id="CHEBI:33737"/>
        <dbReference type="ChEBI" id="CHEBI:33738"/>
        <dbReference type="ChEBI" id="CHEBI:57844"/>
        <dbReference type="ChEBI" id="CHEBI:57856"/>
        <dbReference type="ChEBI" id="CHEBI:59789"/>
        <dbReference type="ChEBI" id="CHEBI:74411"/>
        <dbReference type="ChEBI" id="CHEBI:74497"/>
        <dbReference type="EC" id="2.1.1.192"/>
    </reaction>
</comment>
<comment type="cofactor">
    <cofactor evidence="1">
        <name>[4Fe-4S] cluster</name>
        <dbReference type="ChEBI" id="CHEBI:49883"/>
    </cofactor>
    <text evidence="1">Binds 1 [4Fe-4S] cluster. The cluster is coordinated with 3 cysteines and an exchangeable S-adenosyl-L-methionine.</text>
</comment>
<comment type="subcellular location">
    <subcellularLocation>
        <location evidence="1">Cytoplasm</location>
    </subcellularLocation>
</comment>
<comment type="miscellaneous">
    <text evidence="1">Reaction proceeds by a ping-pong mechanism involving intermediate methylation of a conserved cysteine residue.</text>
</comment>
<comment type="similarity">
    <text evidence="1">Belongs to the radical SAM superfamily. RlmN family.</text>
</comment>
<feature type="chain" id="PRO_0000350348" description="Dual-specificity RNA methyltransferase RlmN">
    <location>
        <begin position="1"/>
        <end position="382"/>
    </location>
</feature>
<feature type="domain" description="Radical SAM core" evidence="2">
    <location>
        <begin position="102"/>
        <end position="342"/>
    </location>
</feature>
<feature type="active site" description="Proton acceptor" evidence="1">
    <location>
        <position position="96"/>
    </location>
</feature>
<feature type="active site" description="S-methylcysteine intermediate" evidence="1">
    <location>
        <position position="345"/>
    </location>
</feature>
<feature type="binding site" evidence="1">
    <location>
        <position position="116"/>
    </location>
    <ligand>
        <name>[4Fe-4S] cluster</name>
        <dbReference type="ChEBI" id="CHEBI:49883"/>
        <note>4Fe-4S-S-AdoMet</note>
    </ligand>
</feature>
<feature type="binding site" evidence="1">
    <location>
        <position position="120"/>
    </location>
    <ligand>
        <name>[4Fe-4S] cluster</name>
        <dbReference type="ChEBI" id="CHEBI:49883"/>
        <note>4Fe-4S-S-AdoMet</note>
    </ligand>
</feature>
<feature type="binding site" evidence="1">
    <location>
        <position position="123"/>
    </location>
    <ligand>
        <name>[4Fe-4S] cluster</name>
        <dbReference type="ChEBI" id="CHEBI:49883"/>
        <note>4Fe-4S-S-AdoMet</note>
    </ligand>
</feature>
<feature type="binding site" evidence="1">
    <location>
        <begin position="170"/>
        <end position="171"/>
    </location>
    <ligand>
        <name>S-adenosyl-L-methionine</name>
        <dbReference type="ChEBI" id="CHEBI:59789"/>
    </ligand>
</feature>
<feature type="binding site" evidence="1">
    <location>
        <position position="202"/>
    </location>
    <ligand>
        <name>S-adenosyl-L-methionine</name>
        <dbReference type="ChEBI" id="CHEBI:59789"/>
    </ligand>
</feature>
<feature type="binding site" evidence="1">
    <location>
        <begin position="224"/>
        <end position="226"/>
    </location>
    <ligand>
        <name>S-adenosyl-L-methionine</name>
        <dbReference type="ChEBI" id="CHEBI:59789"/>
    </ligand>
</feature>
<feature type="binding site" evidence="1">
    <location>
        <position position="302"/>
    </location>
    <ligand>
        <name>S-adenosyl-L-methionine</name>
        <dbReference type="ChEBI" id="CHEBI:59789"/>
    </ligand>
</feature>
<feature type="disulfide bond" description="(transient)" evidence="1">
    <location>
        <begin position="109"/>
        <end position="345"/>
    </location>
</feature>